<name>RS13_CAUVC</name>
<dbReference type="EMBL" id="AE005673">
    <property type="protein sequence ID" value="AAK23251.1"/>
    <property type="molecule type" value="Genomic_DNA"/>
</dbReference>
<dbReference type="PIR" id="G87406">
    <property type="entry name" value="G87406"/>
</dbReference>
<dbReference type="RefSeq" id="NP_420083.1">
    <property type="nucleotide sequence ID" value="NC_002696.2"/>
</dbReference>
<dbReference type="RefSeq" id="WP_010919149.1">
    <property type="nucleotide sequence ID" value="NC_002696.2"/>
</dbReference>
<dbReference type="SMR" id="Q9A8T1"/>
<dbReference type="STRING" id="190650.CC_1270"/>
<dbReference type="EnsemblBacteria" id="AAK23251">
    <property type="protein sequence ID" value="AAK23251"/>
    <property type="gene ID" value="CC_1270"/>
</dbReference>
<dbReference type="KEGG" id="ccr:CC_1270"/>
<dbReference type="PATRIC" id="fig|190650.5.peg.1295"/>
<dbReference type="eggNOG" id="COG0099">
    <property type="taxonomic scope" value="Bacteria"/>
</dbReference>
<dbReference type="HOGENOM" id="CLU_103849_1_2_5"/>
<dbReference type="BioCyc" id="CAULO:CC1270-MONOMER"/>
<dbReference type="Proteomes" id="UP000001816">
    <property type="component" value="Chromosome"/>
</dbReference>
<dbReference type="GO" id="GO:0005829">
    <property type="term" value="C:cytosol"/>
    <property type="evidence" value="ECO:0007669"/>
    <property type="project" value="TreeGrafter"/>
</dbReference>
<dbReference type="GO" id="GO:0015935">
    <property type="term" value="C:small ribosomal subunit"/>
    <property type="evidence" value="ECO:0007669"/>
    <property type="project" value="TreeGrafter"/>
</dbReference>
<dbReference type="GO" id="GO:0019843">
    <property type="term" value="F:rRNA binding"/>
    <property type="evidence" value="ECO:0007669"/>
    <property type="project" value="UniProtKB-UniRule"/>
</dbReference>
<dbReference type="GO" id="GO:0003735">
    <property type="term" value="F:structural constituent of ribosome"/>
    <property type="evidence" value="ECO:0007669"/>
    <property type="project" value="InterPro"/>
</dbReference>
<dbReference type="GO" id="GO:0000049">
    <property type="term" value="F:tRNA binding"/>
    <property type="evidence" value="ECO:0007669"/>
    <property type="project" value="UniProtKB-UniRule"/>
</dbReference>
<dbReference type="GO" id="GO:0006412">
    <property type="term" value="P:translation"/>
    <property type="evidence" value="ECO:0007669"/>
    <property type="project" value="UniProtKB-UniRule"/>
</dbReference>
<dbReference type="FunFam" id="1.10.8.50:FF:000001">
    <property type="entry name" value="30S ribosomal protein S13"/>
    <property type="match status" value="1"/>
</dbReference>
<dbReference type="FunFam" id="4.10.910.10:FF:000001">
    <property type="entry name" value="30S ribosomal protein S13"/>
    <property type="match status" value="1"/>
</dbReference>
<dbReference type="Gene3D" id="1.10.8.50">
    <property type="match status" value="1"/>
</dbReference>
<dbReference type="Gene3D" id="4.10.910.10">
    <property type="entry name" value="30s ribosomal protein s13, domain 2"/>
    <property type="match status" value="1"/>
</dbReference>
<dbReference type="HAMAP" id="MF_01315">
    <property type="entry name" value="Ribosomal_uS13"/>
    <property type="match status" value="1"/>
</dbReference>
<dbReference type="InterPro" id="IPR027437">
    <property type="entry name" value="Rbsml_uS13_C"/>
</dbReference>
<dbReference type="InterPro" id="IPR001892">
    <property type="entry name" value="Ribosomal_uS13"/>
</dbReference>
<dbReference type="InterPro" id="IPR010979">
    <property type="entry name" value="Ribosomal_uS13-like_H2TH"/>
</dbReference>
<dbReference type="InterPro" id="IPR019980">
    <property type="entry name" value="Ribosomal_uS13_bac-type"/>
</dbReference>
<dbReference type="InterPro" id="IPR018269">
    <property type="entry name" value="Ribosomal_uS13_CS"/>
</dbReference>
<dbReference type="NCBIfam" id="TIGR03631">
    <property type="entry name" value="uS13_bact"/>
    <property type="match status" value="1"/>
</dbReference>
<dbReference type="PANTHER" id="PTHR10871">
    <property type="entry name" value="30S RIBOSOMAL PROTEIN S13/40S RIBOSOMAL PROTEIN S18"/>
    <property type="match status" value="1"/>
</dbReference>
<dbReference type="PANTHER" id="PTHR10871:SF1">
    <property type="entry name" value="SMALL RIBOSOMAL SUBUNIT PROTEIN US13M"/>
    <property type="match status" value="1"/>
</dbReference>
<dbReference type="Pfam" id="PF00416">
    <property type="entry name" value="Ribosomal_S13"/>
    <property type="match status" value="1"/>
</dbReference>
<dbReference type="PIRSF" id="PIRSF002134">
    <property type="entry name" value="Ribosomal_S13"/>
    <property type="match status" value="1"/>
</dbReference>
<dbReference type="SUPFAM" id="SSF46946">
    <property type="entry name" value="S13-like H2TH domain"/>
    <property type="match status" value="1"/>
</dbReference>
<dbReference type="PROSITE" id="PS00646">
    <property type="entry name" value="RIBOSOMAL_S13_1"/>
    <property type="match status" value="1"/>
</dbReference>
<dbReference type="PROSITE" id="PS50159">
    <property type="entry name" value="RIBOSOMAL_S13_2"/>
    <property type="match status" value="1"/>
</dbReference>
<evidence type="ECO:0000255" key="1">
    <source>
        <dbReference type="HAMAP-Rule" id="MF_01315"/>
    </source>
</evidence>
<evidence type="ECO:0000256" key="2">
    <source>
        <dbReference type="SAM" id="MobiDB-lite"/>
    </source>
</evidence>
<evidence type="ECO:0000305" key="3"/>
<sequence length="122" mass="13866">MARIAGVNIPTNKRVLIALQYIHGIGQKSAREIITKVGIEDARRVNQLTDAEVLQIRETIDRDYTVEGDLRRENSMNIKRLMDLACYRGLRHRKGLPVRGQRTHTNARTRKGPAKPIAGKKK</sequence>
<protein>
    <recommendedName>
        <fullName evidence="1">Small ribosomal subunit protein uS13</fullName>
    </recommendedName>
    <alternativeName>
        <fullName evidence="3">30S ribosomal protein S13</fullName>
    </alternativeName>
</protein>
<accession>Q9A8T1</accession>
<gene>
    <name evidence="1" type="primary">rpsM</name>
    <name type="ordered locus">CC_1270</name>
</gene>
<reference key="1">
    <citation type="journal article" date="2001" name="Proc. Natl. Acad. Sci. U.S.A.">
        <title>Complete genome sequence of Caulobacter crescentus.</title>
        <authorList>
            <person name="Nierman W.C."/>
            <person name="Feldblyum T.V."/>
            <person name="Laub M.T."/>
            <person name="Paulsen I.T."/>
            <person name="Nelson K.E."/>
            <person name="Eisen J.A."/>
            <person name="Heidelberg J.F."/>
            <person name="Alley M.R.K."/>
            <person name="Ohta N."/>
            <person name="Maddock J.R."/>
            <person name="Potocka I."/>
            <person name="Nelson W.C."/>
            <person name="Newton A."/>
            <person name="Stephens C."/>
            <person name="Phadke N.D."/>
            <person name="Ely B."/>
            <person name="DeBoy R.T."/>
            <person name="Dodson R.J."/>
            <person name="Durkin A.S."/>
            <person name="Gwinn M.L."/>
            <person name="Haft D.H."/>
            <person name="Kolonay J.F."/>
            <person name="Smit J."/>
            <person name="Craven M.B."/>
            <person name="Khouri H.M."/>
            <person name="Shetty J."/>
            <person name="Berry K.J."/>
            <person name="Utterback T.R."/>
            <person name="Tran K."/>
            <person name="Wolf A.M."/>
            <person name="Vamathevan J.J."/>
            <person name="Ermolaeva M.D."/>
            <person name="White O."/>
            <person name="Salzberg S.L."/>
            <person name="Venter J.C."/>
            <person name="Shapiro L."/>
            <person name="Fraser C.M."/>
        </authorList>
    </citation>
    <scope>NUCLEOTIDE SEQUENCE [LARGE SCALE GENOMIC DNA]</scope>
    <source>
        <strain>ATCC 19089 / CIP 103742 / CB 15</strain>
    </source>
</reference>
<keyword id="KW-1185">Reference proteome</keyword>
<keyword id="KW-0687">Ribonucleoprotein</keyword>
<keyword id="KW-0689">Ribosomal protein</keyword>
<keyword id="KW-0694">RNA-binding</keyword>
<keyword id="KW-0699">rRNA-binding</keyword>
<keyword id="KW-0820">tRNA-binding</keyword>
<proteinExistence type="inferred from homology"/>
<feature type="chain" id="PRO_0000132076" description="Small ribosomal subunit protein uS13">
    <location>
        <begin position="1"/>
        <end position="122"/>
    </location>
</feature>
<feature type="region of interest" description="Disordered" evidence="2">
    <location>
        <begin position="95"/>
        <end position="122"/>
    </location>
</feature>
<comment type="function">
    <text evidence="1">Located at the top of the head of the 30S subunit, it contacts several helices of the 16S rRNA. In the 70S ribosome it contacts the 23S rRNA (bridge B1a) and protein L5 of the 50S subunit (bridge B1b), connecting the 2 subunits; these bridges are implicated in subunit movement. Contacts the tRNAs in the A and P-sites.</text>
</comment>
<comment type="subunit">
    <text evidence="1">Part of the 30S ribosomal subunit. Forms a loose heterodimer with protein S19. Forms two bridges to the 50S subunit in the 70S ribosome.</text>
</comment>
<comment type="similarity">
    <text evidence="1">Belongs to the universal ribosomal protein uS13 family.</text>
</comment>
<organism>
    <name type="scientific">Caulobacter vibrioides (strain ATCC 19089 / CIP 103742 / CB 15)</name>
    <name type="common">Caulobacter crescentus</name>
    <dbReference type="NCBI Taxonomy" id="190650"/>
    <lineage>
        <taxon>Bacteria</taxon>
        <taxon>Pseudomonadati</taxon>
        <taxon>Pseudomonadota</taxon>
        <taxon>Alphaproteobacteria</taxon>
        <taxon>Caulobacterales</taxon>
        <taxon>Caulobacteraceae</taxon>
        <taxon>Caulobacter</taxon>
    </lineage>
</organism>